<dbReference type="EC" id="3.5.3.1" evidence="2"/>
<dbReference type="EMBL" id="AL606620">
    <property type="protein sequence ID" value="CAE02758.1"/>
    <property type="molecule type" value="Genomic_DNA"/>
</dbReference>
<dbReference type="EMBL" id="AL662992">
    <property type="protein sequence ID" value="CAE04612.2"/>
    <property type="molecule type" value="Genomic_DNA"/>
</dbReference>
<dbReference type="EMBL" id="AP008210">
    <property type="protein sequence ID" value="BAF13927.1"/>
    <property type="molecule type" value="Genomic_DNA"/>
</dbReference>
<dbReference type="EMBL" id="AP014960">
    <property type="protein sequence ID" value="BAS87540.1"/>
    <property type="molecule type" value="Genomic_DNA"/>
</dbReference>
<dbReference type="EMBL" id="CM000141">
    <property type="protein sequence ID" value="EAZ29443.1"/>
    <property type="molecule type" value="Genomic_DNA"/>
</dbReference>
<dbReference type="EMBL" id="AK059655">
    <property type="protein sequence ID" value="BAG87067.1"/>
    <property type="molecule type" value="mRNA"/>
</dbReference>
<dbReference type="RefSeq" id="XP_015636156.1">
    <property type="nucleotide sequence ID" value="XM_015780670.1"/>
</dbReference>
<dbReference type="SMR" id="Q7X7N2"/>
<dbReference type="FunCoup" id="Q7X7N2">
    <property type="interactions" value="1540"/>
</dbReference>
<dbReference type="STRING" id="39947.Q7X7N2"/>
<dbReference type="PaxDb" id="39947-Q7X7N2"/>
<dbReference type="EnsemblPlants" id="Os04t0106300-01">
    <property type="protein sequence ID" value="Os04t0106300-01"/>
    <property type="gene ID" value="Os04g0106300"/>
</dbReference>
<dbReference type="Gramene" id="Os04t0106300-01">
    <property type="protein sequence ID" value="Os04t0106300-01"/>
    <property type="gene ID" value="Os04g0106300"/>
</dbReference>
<dbReference type="KEGG" id="dosa:Os04g0106300"/>
<dbReference type="eggNOG" id="KOG2964">
    <property type="taxonomic scope" value="Eukaryota"/>
</dbReference>
<dbReference type="HOGENOM" id="CLU_039478_3_0_1"/>
<dbReference type="InParanoid" id="Q7X7N2"/>
<dbReference type="OMA" id="CIDAGFV"/>
<dbReference type="OrthoDB" id="288726at2759"/>
<dbReference type="PlantReactome" id="R-OSA-1119289">
    <property type="pathway name" value="Arginine degradation"/>
</dbReference>
<dbReference type="PlantReactome" id="R-OSA-1119495">
    <property type="pathway name" value="Citrulline biosynthesis"/>
</dbReference>
<dbReference type="UniPathway" id="UPA00158">
    <property type="reaction ID" value="UER00270"/>
</dbReference>
<dbReference type="Proteomes" id="UP000000763">
    <property type="component" value="Chromosome 4"/>
</dbReference>
<dbReference type="Proteomes" id="UP000007752">
    <property type="component" value="Chromosome 4"/>
</dbReference>
<dbReference type="Proteomes" id="UP000059680">
    <property type="component" value="Chromosome 4"/>
</dbReference>
<dbReference type="GO" id="GO:0005739">
    <property type="term" value="C:mitochondrion"/>
    <property type="evidence" value="ECO:0007669"/>
    <property type="project" value="UniProtKB-SubCell"/>
</dbReference>
<dbReference type="GO" id="GO:0008783">
    <property type="term" value="F:agmatinase activity"/>
    <property type="evidence" value="ECO:0000318"/>
    <property type="project" value="GO_Central"/>
</dbReference>
<dbReference type="GO" id="GO:0004053">
    <property type="term" value="F:arginase activity"/>
    <property type="evidence" value="ECO:0007669"/>
    <property type="project" value="UniProtKB-EC"/>
</dbReference>
<dbReference type="GO" id="GO:0046872">
    <property type="term" value="F:metal ion binding"/>
    <property type="evidence" value="ECO:0007669"/>
    <property type="project" value="UniProtKB-KW"/>
</dbReference>
<dbReference type="GO" id="GO:0033389">
    <property type="term" value="P:putrescine biosynthetic process from arginine, via agmatine"/>
    <property type="evidence" value="ECO:0000318"/>
    <property type="project" value="GO_Central"/>
</dbReference>
<dbReference type="GO" id="GO:0000050">
    <property type="term" value="P:urea cycle"/>
    <property type="evidence" value="ECO:0007669"/>
    <property type="project" value="UniProtKB-UniPathway"/>
</dbReference>
<dbReference type="CDD" id="cd11593">
    <property type="entry name" value="Agmatinase-like_2"/>
    <property type="match status" value="1"/>
</dbReference>
<dbReference type="FunFam" id="3.40.800.10:FF:000007">
    <property type="entry name" value="Arginase 1, mitochondrial"/>
    <property type="match status" value="1"/>
</dbReference>
<dbReference type="Gene3D" id="3.40.800.10">
    <property type="entry name" value="Ureohydrolase domain"/>
    <property type="match status" value="1"/>
</dbReference>
<dbReference type="InterPro" id="IPR006035">
    <property type="entry name" value="Ureohydrolase"/>
</dbReference>
<dbReference type="InterPro" id="IPR023696">
    <property type="entry name" value="Ureohydrolase_dom_sf"/>
</dbReference>
<dbReference type="InterPro" id="IPR020855">
    <property type="entry name" value="Ureohydrolase_Mn_BS"/>
</dbReference>
<dbReference type="PANTHER" id="PTHR11358">
    <property type="entry name" value="ARGINASE/AGMATINASE"/>
    <property type="match status" value="1"/>
</dbReference>
<dbReference type="PANTHER" id="PTHR11358:SF26">
    <property type="entry name" value="GUANIDINO ACID HYDROLASE, MITOCHONDRIAL"/>
    <property type="match status" value="1"/>
</dbReference>
<dbReference type="Pfam" id="PF00491">
    <property type="entry name" value="Arginase"/>
    <property type="match status" value="1"/>
</dbReference>
<dbReference type="PIRSF" id="PIRSF036979">
    <property type="entry name" value="Arginase"/>
    <property type="match status" value="1"/>
</dbReference>
<dbReference type="SUPFAM" id="SSF52768">
    <property type="entry name" value="Arginase/deacetylase"/>
    <property type="match status" value="1"/>
</dbReference>
<dbReference type="PROSITE" id="PS01053">
    <property type="entry name" value="ARGINASE_1"/>
    <property type="match status" value="1"/>
</dbReference>
<dbReference type="PROSITE" id="PS51409">
    <property type="entry name" value="ARGINASE_2"/>
    <property type="match status" value="1"/>
</dbReference>
<feature type="transit peptide" description="Mitochondrion" evidence="4">
    <location>
        <begin position="1"/>
        <end position="24"/>
    </location>
</feature>
<feature type="chain" id="PRO_0000424258" description="Arginase 1, mitochondrial">
    <location>
        <begin position="25"/>
        <end position="340"/>
    </location>
</feature>
<feature type="binding site" evidence="5">
    <location>
        <position position="159"/>
    </location>
    <ligand>
        <name>Mn(2+)</name>
        <dbReference type="ChEBI" id="CHEBI:29035"/>
        <label>1</label>
    </ligand>
</feature>
<feature type="binding site" evidence="5">
    <location>
        <position position="183"/>
    </location>
    <ligand>
        <name>Mn(2+)</name>
        <dbReference type="ChEBI" id="CHEBI:29035"/>
        <label>1</label>
    </ligand>
</feature>
<feature type="binding site" evidence="5">
    <location>
        <position position="183"/>
    </location>
    <ligand>
        <name>Mn(2+)</name>
        <dbReference type="ChEBI" id="CHEBI:29035"/>
        <label>2</label>
    </ligand>
</feature>
<feature type="binding site" evidence="3">
    <location>
        <begin position="185"/>
        <end position="189"/>
    </location>
    <ligand>
        <name>substrate</name>
    </ligand>
</feature>
<feature type="binding site" evidence="5">
    <location>
        <position position="185"/>
    </location>
    <ligand>
        <name>Mn(2+)</name>
        <dbReference type="ChEBI" id="CHEBI:29035"/>
        <label>2</label>
    </ligand>
</feature>
<feature type="binding site" evidence="5">
    <location>
        <position position="187"/>
    </location>
    <ligand>
        <name>Mn(2+)</name>
        <dbReference type="ChEBI" id="CHEBI:29035"/>
        <label>1</label>
    </ligand>
</feature>
<feature type="binding site" evidence="3">
    <location>
        <begin position="193"/>
        <end position="195"/>
    </location>
    <ligand>
        <name>substrate</name>
    </ligand>
</feature>
<feature type="binding site" evidence="5">
    <location>
        <position position="268"/>
    </location>
    <ligand>
        <name>Mn(2+)</name>
        <dbReference type="ChEBI" id="CHEBI:29035"/>
        <label>1</label>
    </ligand>
</feature>
<feature type="binding site" evidence="5">
    <location>
        <position position="268"/>
    </location>
    <ligand>
        <name>Mn(2+)</name>
        <dbReference type="ChEBI" id="CHEBI:29035"/>
        <label>2</label>
    </ligand>
</feature>
<feature type="binding site" evidence="5">
    <location>
        <position position="270"/>
    </location>
    <ligand>
        <name>Mn(2+)</name>
        <dbReference type="ChEBI" id="CHEBI:29035"/>
        <label>2</label>
    </ligand>
</feature>
<feature type="binding site" evidence="3">
    <location>
        <position position="311"/>
    </location>
    <ligand>
        <name>substrate</name>
    </ligand>
</feature>
<keyword id="KW-0056">Arginine metabolism</keyword>
<keyword id="KW-0378">Hydrolase</keyword>
<keyword id="KW-0464">Manganese</keyword>
<keyword id="KW-0479">Metal-binding</keyword>
<keyword id="KW-0496">Mitochondrion</keyword>
<keyword id="KW-1185">Reference proteome</keyword>
<keyword id="KW-0809">Transit peptide</keyword>
<accession>Q7X7N2</accession>
<accession>A0A0P0W6F8</accession>
<proteinExistence type="evidence at transcript level"/>
<name>ARGI1_ORYSJ</name>
<organism>
    <name type="scientific">Oryza sativa subsp. japonica</name>
    <name type="common">Rice</name>
    <dbReference type="NCBI Taxonomy" id="39947"/>
    <lineage>
        <taxon>Eukaryota</taxon>
        <taxon>Viridiplantae</taxon>
        <taxon>Streptophyta</taxon>
        <taxon>Embryophyta</taxon>
        <taxon>Tracheophyta</taxon>
        <taxon>Spermatophyta</taxon>
        <taxon>Magnoliopsida</taxon>
        <taxon>Liliopsida</taxon>
        <taxon>Poales</taxon>
        <taxon>Poaceae</taxon>
        <taxon>BOP clade</taxon>
        <taxon>Oryzoideae</taxon>
        <taxon>Oryzeae</taxon>
        <taxon>Oryzinae</taxon>
        <taxon>Oryza</taxon>
        <taxon>Oryza sativa</taxon>
    </lineage>
</organism>
<sequence>MGGVAAGTRWIHHVRRLSAAKVSADALERGQSRVIDASLTLIRERAKLKAELLRALGGVKASACLLGVPLGHNSSFLQGPAFAPPRIREAIWCGSTNSSTEEGKELNDPRVLTDVGDVPIQEIRDCGVEDDRLMNVVSESVKTVMEEDPLRPLVLGGDHSISYPVVRAVSEKLGGPVDILHLDAHPDIYDAFEGNIYSHASSFARIMEGGYARRLLQVGIRSITKEGREQGKRFGVEQYEMRTFSKDREKLESLKLGEGVKGVYISVDVDCLDPAFAPGVSHIEPGGLSFRDVLNILHNLQGDVVAGDVVEFNPQRDTVDGMTAMVAAKLVRELTAKISK</sequence>
<protein>
    <recommendedName>
        <fullName>Arginase 1, mitochondrial</fullName>
        <ecNumber evidence="2">3.5.3.1</ecNumber>
    </recommendedName>
    <alternativeName>
        <fullName>Arginine amidohydrolase 1</fullName>
    </alternativeName>
</protein>
<gene>
    <name type="primary">ARG1</name>
    <name type="ordered locus">Os04g0106300</name>
    <name type="ordered locus">LOC_Os04g01590</name>
    <name type="ORF">OsJ_13517</name>
    <name type="ORF">OSJNBb0004G23.10</name>
    <name type="ORF">OSJNBb0085F13.5</name>
</gene>
<comment type="function">
    <text evidence="1">Catalyzes the hydrolysis of L-arginine to urea and L-ornithine. The latter can be utilized in the urea cycle or as a precursor for the synthesis of both polyamines and proline (By similarity).</text>
</comment>
<comment type="catalytic activity">
    <reaction evidence="2">
        <text>L-arginine + H2O = urea + L-ornithine</text>
        <dbReference type="Rhea" id="RHEA:20569"/>
        <dbReference type="ChEBI" id="CHEBI:15377"/>
        <dbReference type="ChEBI" id="CHEBI:16199"/>
        <dbReference type="ChEBI" id="CHEBI:32682"/>
        <dbReference type="ChEBI" id="CHEBI:46911"/>
        <dbReference type="EC" id="3.5.3.1"/>
    </reaction>
</comment>
<comment type="cofactor">
    <cofactor evidence="5">
        <name>Mn(2+)</name>
        <dbReference type="ChEBI" id="CHEBI:29035"/>
    </cofactor>
    <text evidence="5">Binds 2 manganese ions per subunit.</text>
</comment>
<comment type="pathway">
    <text evidence="2">Nitrogen metabolism; urea cycle; L-ornithine and urea from L-arginine: step 1/1.</text>
</comment>
<comment type="subcellular location">
    <subcellularLocation>
        <location evidence="1">Mitochondrion</location>
    </subcellularLocation>
</comment>
<comment type="similarity">
    <text evidence="5">Belongs to the arginase family.</text>
</comment>
<reference key="1">
    <citation type="journal article" date="2002" name="Nature">
        <title>Sequence and analysis of rice chromosome 4.</title>
        <authorList>
            <person name="Feng Q."/>
            <person name="Zhang Y."/>
            <person name="Hao P."/>
            <person name="Wang S."/>
            <person name="Fu G."/>
            <person name="Huang Y."/>
            <person name="Li Y."/>
            <person name="Zhu J."/>
            <person name="Liu Y."/>
            <person name="Hu X."/>
            <person name="Jia P."/>
            <person name="Zhang Y."/>
            <person name="Zhao Q."/>
            <person name="Ying K."/>
            <person name="Yu S."/>
            <person name="Tang Y."/>
            <person name="Weng Q."/>
            <person name="Zhang L."/>
            <person name="Lu Y."/>
            <person name="Mu J."/>
            <person name="Lu Y."/>
            <person name="Zhang L.S."/>
            <person name="Yu Z."/>
            <person name="Fan D."/>
            <person name="Liu X."/>
            <person name="Lu T."/>
            <person name="Li C."/>
            <person name="Wu Y."/>
            <person name="Sun T."/>
            <person name="Lei H."/>
            <person name="Li T."/>
            <person name="Hu H."/>
            <person name="Guan J."/>
            <person name="Wu M."/>
            <person name="Zhang R."/>
            <person name="Zhou B."/>
            <person name="Chen Z."/>
            <person name="Chen L."/>
            <person name="Jin Z."/>
            <person name="Wang R."/>
            <person name="Yin H."/>
            <person name="Cai Z."/>
            <person name="Ren S."/>
            <person name="Lv G."/>
            <person name="Gu W."/>
            <person name="Zhu G."/>
            <person name="Tu Y."/>
            <person name="Jia J."/>
            <person name="Zhang Y."/>
            <person name="Chen J."/>
            <person name="Kang H."/>
            <person name="Chen X."/>
            <person name="Shao C."/>
            <person name="Sun Y."/>
            <person name="Hu Q."/>
            <person name="Zhang X."/>
            <person name="Zhang W."/>
            <person name="Wang L."/>
            <person name="Ding C."/>
            <person name="Sheng H."/>
            <person name="Gu J."/>
            <person name="Chen S."/>
            <person name="Ni L."/>
            <person name="Zhu F."/>
            <person name="Chen W."/>
            <person name="Lan L."/>
            <person name="Lai Y."/>
            <person name="Cheng Z."/>
            <person name="Gu M."/>
            <person name="Jiang J."/>
            <person name="Li J."/>
            <person name="Hong G."/>
            <person name="Xue Y."/>
            <person name="Han B."/>
        </authorList>
    </citation>
    <scope>NUCLEOTIDE SEQUENCE [LARGE SCALE GENOMIC DNA]</scope>
    <source>
        <strain>cv. Nipponbare</strain>
    </source>
</reference>
<reference key="2">
    <citation type="journal article" date="2005" name="Nature">
        <title>The map-based sequence of the rice genome.</title>
        <authorList>
            <consortium name="International rice genome sequencing project (IRGSP)"/>
        </authorList>
    </citation>
    <scope>NUCLEOTIDE SEQUENCE [LARGE SCALE GENOMIC DNA]</scope>
    <source>
        <strain>cv. Nipponbare</strain>
    </source>
</reference>
<reference key="3">
    <citation type="journal article" date="2008" name="Nucleic Acids Res.">
        <title>The rice annotation project database (RAP-DB): 2008 update.</title>
        <authorList>
            <consortium name="The rice annotation project (RAP)"/>
        </authorList>
    </citation>
    <scope>GENOME REANNOTATION</scope>
    <source>
        <strain>cv. Nipponbare</strain>
    </source>
</reference>
<reference key="4">
    <citation type="journal article" date="2013" name="Rice">
        <title>Improvement of the Oryza sativa Nipponbare reference genome using next generation sequence and optical map data.</title>
        <authorList>
            <person name="Kawahara Y."/>
            <person name="de la Bastide M."/>
            <person name="Hamilton J.P."/>
            <person name="Kanamori H."/>
            <person name="McCombie W.R."/>
            <person name="Ouyang S."/>
            <person name="Schwartz D.C."/>
            <person name="Tanaka T."/>
            <person name="Wu J."/>
            <person name="Zhou S."/>
            <person name="Childs K.L."/>
            <person name="Davidson R.M."/>
            <person name="Lin H."/>
            <person name="Quesada-Ocampo L."/>
            <person name="Vaillancourt B."/>
            <person name="Sakai H."/>
            <person name="Lee S.S."/>
            <person name="Kim J."/>
            <person name="Numa H."/>
            <person name="Itoh T."/>
            <person name="Buell C.R."/>
            <person name="Matsumoto T."/>
        </authorList>
    </citation>
    <scope>GENOME REANNOTATION</scope>
    <source>
        <strain>cv. Nipponbare</strain>
    </source>
</reference>
<reference key="5">
    <citation type="journal article" date="2005" name="PLoS Biol.">
        <title>The genomes of Oryza sativa: a history of duplications.</title>
        <authorList>
            <person name="Yu J."/>
            <person name="Wang J."/>
            <person name="Lin W."/>
            <person name="Li S."/>
            <person name="Li H."/>
            <person name="Zhou J."/>
            <person name="Ni P."/>
            <person name="Dong W."/>
            <person name="Hu S."/>
            <person name="Zeng C."/>
            <person name="Zhang J."/>
            <person name="Zhang Y."/>
            <person name="Li R."/>
            <person name="Xu Z."/>
            <person name="Li S."/>
            <person name="Li X."/>
            <person name="Zheng H."/>
            <person name="Cong L."/>
            <person name="Lin L."/>
            <person name="Yin J."/>
            <person name="Geng J."/>
            <person name="Li G."/>
            <person name="Shi J."/>
            <person name="Liu J."/>
            <person name="Lv H."/>
            <person name="Li J."/>
            <person name="Wang J."/>
            <person name="Deng Y."/>
            <person name="Ran L."/>
            <person name="Shi X."/>
            <person name="Wang X."/>
            <person name="Wu Q."/>
            <person name="Li C."/>
            <person name="Ren X."/>
            <person name="Wang J."/>
            <person name="Wang X."/>
            <person name="Li D."/>
            <person name="Liu D."/>
            <person name="Zhang X."/>
            <person name="Ji Z."/>
            <person name="Zhao W."/>
            <person name="Sun Y."/>
            <person name="Zhang Z."/>
            <person name="Bao J."/>
            <person name="Han Y."/>
            <person name="Dong L."/>
            <person name="Ji J."/>
            <person name="Chen P."/>
            <person name="Wu S."/>
            <person name="Liu J."/>
            <person name="Xiao Y."/>
            <person name="Bu D."/>
            <person name="Tan J."/>
            <person name="Yang L."/>
            <person name="Ye C."/>
            <person name="Zhang J."/>
            <person name="Xu J."/>
            <person name="Zhou Y."/>
            <person name="Yu Y."/>
            <person name="Zhang B."/>
            <person name="Zhuang S."/>
            <person name="Wei H."/>
            <person name="Liu B."/>
            <person name="Lei M."/>
            <person name="Yu H."/>
            <person name="Li Y."/>
            <person name="Xu H."/>
            <person name="Wei S."/>
            <person name="He X."/>
            <person name="Fang L."/>
            <person name="Zhang Z."/>
            <person name="Zhang Y."/>
            <person name="Huang X."/>
            <person name="Su Z."/>
            <person name="Tong W."/>
            <person name="Li J."/>
            <person name="Tong Z."/>
            <person name="Li S."/>
            <person name="Ye J."/>
            <person name="Wang L."/>
            <person name="Fang L."/>
            <person name="Lei T."/>
            <person name="Chen C.-S."/>
            <person name="Chen H.-C."/>
            <person name="Xu Z."/>
            <person name="Li H."/>
            <person name="Huang H."/>
            <person name="Zhang F."/>
            <person name="Xu H."/>
            <person name="Li N."/>
            <person name="Zhao C."/>
            <person name="Li S."/>
            <person name="Dong L."/>
            <person name="Huang Y."/>
            <person name="Li L."/>
            <person name="Xi Y."/>
            <person name="Qi Q."/>
            <person name="Li W."/>
            <person name="Zhang B."/>
            <person name="Hu W."/>
            <person name="Zhang Y."/>
            <person name="Tian X."/>
            <person name="Jiao Y."/>
            <person name="Liang X."/>
            <person name="Jin J."/>
            <person name="Gao L."/>
            <person name="Zheng W."/>
            <person name="Hao B."/>
            <person name="Liu S.-M."/>
            <person name="Wang W."/>
            <person name="Yuan L."/>
            <person name="Cao M."/>
            <person name="McDermott J."/>
            <person name="Samudrala R."/>
            <person name="Wang J."/>
            <person name="Wong G.K.-S."/>
            <person name="Yang H."/>
        </authorList>
    </citation>
    <scope>NUCLEOTIDE SEQUENCE [LARGE SCALE GENOMIC DNA]</scope>
    <source>
        <strain>cv. Nipponbare</strain>
    </source>
</reference>
<reference key="6">
    <citation type="journal article" date="2003" name="Science">
        <title>Collection, mapping, and annotation of over 28,000 cDNA clones from japonica rice.</title>
        <authorList>
            <consortium name="The rice full-length cDNA consortium"/>
        </authorList>
    </citation>
    <scope>NUCLEOTIDE SEQUENCE [LARGE SCALE MRNA]</scope>
    <source>
        <strain>cv. Nipponbare</strain>
    </source>
</reference>
<evidence type="ECO:0000250" key="1"/>
<evidence type="ECO:0000250" key="2">
    <source>
        <dbReference type="UniProtKB" id="P05089"/>
    </source>
</evidence>
<evidence type="ECO:0000250" key="3">
    <source>
        <dbReference type="UniProtKB" id="P53608"/>
    </source>
</evidence>
<evidence type="ECO:0000255" key="4"/>
<evidence type="ECO:0000255" key="5">
    <source>
        <dbReference type="PROSITE-ProRule" id="PRU00742"/>
    </source>
</evidence>